<gene>
    <name type="primary">OLE1</name>
    <name type="ordered locus">YGL055W</name>
</gene>
<organism>
    <name type="scientific">Saccharomyces cerevisiae (strain ATCC 204508 / S288c)</name>
    <name type="common">Baker's yeast</name>
    <dbReference type="NCBI Taxonomy" id="559292"/>
    <lineage>
        <taxon>Eukaryota</taxon>
        <taxon>Fungi</taxon>
        <taxon>Dikarya</taxon>
        <taxon>Ascomycota</taxon>
        <taxon>Saccharomycotina</taxon>
        <taxon>Saccharomycetes</taxon>
        <taxon>Saccharomycetales</taxon>
        <taxon>Saccharomycetaceae</taxon>
        <taxon>Saccharomyces</taxon>
    </lineage>
</organism>
<proteinExistence type="evidence at protein level"/>
<protein>
    <recommendedName>
        <fullName>Acyl-CoA desaturase 1</fullName>
        <ecNumber evidence="7 11">1.14.19.1</ecNumber>
    </recommendedName>
    <alternativeName>
        <fullName evidence="12">Delta 9 fatty acid desaturase</fullName>
    </alternativeName>
    <alternativeName>
        <fullName>Fatty acid desaturase 1</fullName>
    </alternativeName>
    <alternativeName>
        <fullName>Stearoyl-CoA desaturase 1</fullName>
    </alternativeName>
</protein>
<keyword id="KW-0249">Electron transport</keyword>
<keyword id="KW-0256">Endoplasmic reticulum</keyword>
<keyword id="KW-0275">Fatty acid biosynthesis</keyword>
<keyword id="KW-0276">Fatty acid metabolism</keyword>
<keyword id="KW-0349">Heme</keyword>
<keyword id="KW-0408">Iron</keyword>
<keyword id="KW-0444">Lipid biosynthesis</keyword>
<keyword id="KW-0443">Lipid metabolism</keyword>
<keyword id="KW-0472">Membrane</keyword>
<keyword id="KW-0479">Metal-binding</keyword>
<keyword id="KW-0560">Oxidoreductase</keyword>
<keyword id="KW-1185">Reference proteome</keyword>
<keyword id="KW-0812">Transmembrane</keyword>
<keyword id="KW-1133">Transmembrane helix</keyword>
<keyword id="KW-0813">Transport</keyword>
<dbReference type="EC" id="1.14.19.1" evidence="7 11"/>
<dbReference type="EMBL" id="J05676">
    <property type="protein sequence ID" value="AAA34826.1"/>
    <property type="molecule type" value="Genomic_DNA"/>
</dbReference>
<dbReference type="EMBL" id="Z72577">
    <property type="protein sequence ID" value="CAA96757.1"/>
    <property type="molecule type" value="Genomic_DNA"/>
</dbReference>
<dbReference type="EMBL" id="AY693010">
    <property type="protein sequence ID" value="AAT93029.1"/>
    <property type="molecule type" value="Genomic_DNA"/>
</dbReference>
<dbReference type="EMBL" id="BK006941">
    <property type="protein sequence ID" value="DAA08047.1"/>
    <property type="molecule type" value="Genomic_DNA"/>
</dbReference>
<dbReference type="PIR" id="S64059">
    <property type="entry name" value="S64059"/>
</dbReference>
<dbReference type="RefSeq" id="NP_011460.3">
    <property type="nucleotide sequence ID" value="NM_001180920.3"/>
</dbReference>
<dbReference type="SMR" id="P21147"/>
<dbReference type="BioGRID" id="33192">
    <property type="interactions" value="245"/>
</dbReference>
<dbReference type="DIP" id="DIP-5026N"/>
<dbReference type="FunCoup" id="P21147">
    <property type="interactions" value="1196"/>
</dbReference>
<dbReference type="IntAct" id="P21147">
    <property type="interactions" value="75"/>
</dbReference>
<dbReference type="MINT" id="P21147"/>
<dbReference type="STRING" id="4932.YGL055W"/>
<dbReference type="SwissLipids" id="SLP:000000512"/>
<dbReference type="SwissLipids" id="SLP:000000875"/>
<dbReference type="iPTMnet" id="P21147"/>
<dbReference type="PaxDb" id="4932-YGL055W"/>
<dbReference type="PeptideAtlas" id="P21147"/>
<dbReference type="EnsemblFungi" id="YGL055W_mRNA">
    <property type="protein sequence ID" value="YGL055W"/>
    <property type="gene ID" value="YGL055W"/>
</dbReference>
<dbReference type="GeneID" id="852825"/>
<dbReference type="KEGG" id="sce:YGL055W"/>
<dbReference type="AGR" id="SGD:S000003023"/>
<dbReference type="SGD" id="S000003023">
    <property type="gene designation" value="OLE1"/>
</dbReference>
<dbReference type="VEuPathDB" id="FungiDB:YGL055W"/>
<dbReference type="eggNOG" id="KOG0537">
    <property type="taxonomic scope" value="Eukaryota"/>
</dbReference>
<dbReference type="eggNOG" id="KOG1600">
    <property type="taxonomic scope" value="Eukaryota"/>
</dbReference>
<dbReference type="GeneTree" id="ENSGT00940000176523"/>
<dbReference type="HOGENOM" id="CLU_027359_3_2_1"/>
<dbReference type="InParanoid" id="P21147"/>
<dbReference type="OMA" id="WAHKSYN"/>
<dbReference type="OrthoDB" id="10260134at2759"/>
<dbReference type="BioCyc" id="MetaCyc:YGL055W-MONOMER"/>
<dbReference type="BioCyc" id="YEAST:YGL055W-MONOMER"/>
<dbReference type="Reactome" id="R-SCE-75105">
    <property type="pathway name" value="Fatty acyl-CoA biosynthesis"/>
</dbReference>
<dbReference type="BioGRID-ORCS" id="852825">
    <property type="hits" value="2 hits in 10 CRISPR screens"/>
</dbReference>
<dbReference type="PRO" id="PR:P21147"/>
<dbReference type="Proteomes" id="UP000002311">
    <property type="component" value="Chromosome VII"/>
</dbReference>
<dbReference type="RNAct" id="P21147">
    <property type="molecule type" value="protein"/>
</dbReference>
<dbReference type="GO" id="GO:0005783">
    <property type="term" value="C:endoplasmic reticulum"/>
    <property type="evidence" value="ECO:0007005"/>
    <property type="project" value="SGD"/>
</dbReference>
<dbReference type="GO" id="GO:0005789">
    <property type="term" value="C:endoplasmic reticulum membrane"/>
    <property type="evidence" value="ECO:0000314"/>
    <property type="project" value="SGD"/>
</dbReference>
<dbReference type="GO" id="GO:0009055">
    <property type="term" value="F:electron transfer activity"/>
    <property type="evidence" value="ECO:0000316"/>
    <property type="project" value="SGD"/>
</dbReference>
<dbReference type="GO" id="GO:0020037">
    <property type="term" value="F:heme binding"/>
    <property type="evidence" value="ECO:0007669"/>
    <property type="project" value="InterPro"/>
</dbReference>
<dbReference type="GO" id="GO:0005506">
    <property type="term" value="F:iron ion binding"/>
    <property type="evidence" value="ECO:0000318"/>
    <property type="project" value="GO_Central"/>
</dbReference>
<dbReference type="GO" id="GO:0004768">
    <property type="term" value="F:stearoyl-CoA 9-desaturase activity"/>
    <property type="evidence" value="ECO:0000315"/>
    <property type="project" value="SGD"/>
</dbReference>
<dbReference type="GO" id="GO:0000001">
    <property type="term" value="P:mitochondrion inheritance"/>
    <property type="evidence" value="ECO:0000315"/>
    <property type="project" value="SGD"/>
</dbReference>
<dbReference type="GO" id="GO:0006636">
    <property type="term" value="P:unsaturated fatty acid biosynthetic process"/>
    <property type="evidence" value="ECO:0000315"/>
    <property type="project" value="SGD"/>
</dbReference>
<dbReference type="CDD" id="cd03505">
    <property type="entry name" value="Delta9-FADS-like"/>
    <property type="match status" value="1"/>
</dbReference>
<dbReference type="FunFam" id="3.10.120.10:FF:000004">
    <property type="entry name" value="Acyl-CoA desaturase"/>
    <property type="match status" value="1"/>
</dbReference>
<dbReference type="Gene3D" id="3.10.120.10">
    <property type="entry name" value="Cytochrome b5-like heme/steroid binding domain"/>
    <property type="match status" value="1"/>
</dbReference>
<dbReference type="InterPro" id="IPR009160">
    <property type="entry name" value="Acyl-CoA_deSatase_haem/ster-bd"/>
</dbReference>
<dbReference type="InterPro" id="IPR015876">
    <property type="entry name" value="Acyl-CoA_DS"/>
</dbReference>
<dbReference type="InterPro" id="IPR001199">
    <property type="entry name" value="Cyt_B5-like_heme/steroid-bd"/>
</dbReference>
<dbReference type="InterPro" id="IPR036400">
    <property type="entry name" value="Cyt_B5-like_heme/steroid_sf"/>
</dbReference>
<dbReference type="InterPro" id="IPR018506">
    <property type="entry name" value="Cyt_B5_heme-BS"/>
</dbReference>
<dbReference type="InterPro" id="IPR005804">
    <property type="entry name" value="FA_desaturase_dom"/>
</dbReference>
<dbReference type="InterPro" id="IPR001522">
    <property type="entry name" value="FADS-1_CS"/>
</dbReference>
<dbReference type="PANTHER" id="PTHR11351">
    <property type="entry name" value="ACYL-COA DESATURASE"/>
    <property type="match status" value="1"/>
</dbReference>
<dbReference type="PANTHER" id="PTHR11351:SF31">
    <property type="entry name" value="DESATURASE 1, ISOFORM A-RELATED"/>
    <property type="match status" value="1"/>
</dbReference>
<dbReference type="Pfam" id="PF00173">
    <property type="entry name" value="Cyt-b5"/>
    <property type="match status" value="1"/>
</dbReference>
<dbReference type="Pfam" id="PF00487">
    <property type="entry name" value="FA_desaturase"/>
    <property type="match status" value="1"/>
</dbReference>
<dbReference type="PIRSF" id="PIRSF000345">
    <property type="entry name" value="OLE1"/>
    <property type="match status" value="1"/>
</dbReference>
<dbReference type="PRINTS" id="PR00075">
    <property type="entry name" value="FACDDSATRASE"/>
</dbReference>
<dbReference type="SMART" id="SM01117">
    <property type="entry name" value="Cyt-b5"/>
    <property type="match status" value="1"/>
</dbReference>
<dbReference type="SUPFAM" id="SSF55856">
    <property type="entry name" value="Cytochrome b5-like heme/steroid binding domain"/>
    <property type="match status" value="1"/>
</dbReference>
<dbReference type="PROSITE" id="PS00191">
    <property type="entry name" value="CYTOCHROME_B5_1"/>
    <property type="match status" value="1"/>
</dbReference>
<dbReference type="PROSITE" id="PS50255">
    <property type="entry name" value="CYTOCHROME_B5_2"/>
    <property type="match status" value="1"/>
</dbReference>
<dbReference type="PROSITE" id="PS00476">
    <property type="entry name" value="FATTY_ACID_DESATUR_1"/>
    <property type="match status" value="1"/>
</dbReference>
<feature type="chain" id="PRO_0000185406" description="Acyl-CoA desaturase 1">
    <location>
        <begin position="1"/>
        <end position="510"/>
    </location>
</feature>
<feature type="topological domain" description="Cytoplasmic" evidence="14">
    <location>
        <begin position="1"/>
        <end position="112"/>
    </location>
</feature>
<feature type="transmembrane region" description="Helical" evidence="3">
    <location>
        <begin position="113"/>
        <end position="133"/>
    </location>
</feature>
<feature type="topological domain" description="Lumenal" evidence="14">
    <location>
        <begin position="134"/>
        <end position="138"/>
    </location>
</feature>
<feature type="transmembrane region" description="Helical" evidence="3">
    <location>
        <begin position="139"/>
        <end position="159"/>
    </location>
</feature>
<feature type="topological domain" description="Cytoplasmic" evidence="14">
    <location>
        <begin position="160"/>
        <end position="255"/>
    </location>
</feature>
<feature type="transmembrane region" description="Helical" evidence="3">
    <location>
        <begin position="256"/>
        <end position="276"/>
    </location>
</feature>
<feature type="topological domain" description="Lumenal" evidence="14">
    <location>
        <begin position="277"/>
        <end position="280"/>
    </location>
</feature>
<feature type="transmembrane region" description="Helical" evidence="3">
    <location>
        <begin position="281"/>
        <end position="301"/>
    </location>
</feature>
<feature type="topological domain" description="Cytoplasmic" evidence="6">
    <location>
        <begin position="302"/>
        <end position="510"/>
    </location>
</feature>
<feature type="domain" description="Cytochrome b5 heme-binding" evidence="4">
    <location>
        <begin position="409"/>
        <end position="487"/>
    </location>
</feature>
<feature type="short sequence motif" description="Histidine box-1" evidence="13">
    <location>
        <begin position="161"/>
        <end position="166"/>
    </location>
</feature>
<feature type="short sequence motif" description="Histidine box-2" evidence="13">
    <location>
        <begin position="198"/>
        <end position="202"/>
    </location>
</feature>
<feature type="short sequence motif" description="Histidine box-3" evidence="13">
    <location>
        <begin position="335"/>
        <end position="339"/>
    </location>
</feature>
<feature type="binding site" evidence="2">
    <location>
        <position position="161"/>
    </location>
    <ligand>
        <name>Fe cation</name>
        <dbReference type="ChEBI" id="CHEBI:24875"/>
        <label>1</label>
    </ligand>
</feature>
<feature type="binding site" evidence="2">
    <location>
        <position position="166"/>
    </location>
    <ligand>
        <name>Fe cation</name>
        <dbReference type="ChEBI" id="CHEBI:24875"/>
        <label>1</label>
    </ligand>
</feature>
<feature type="binding site" evidence="2">
    <location>
        <position position="198"/>
    </location>
    <ligand>
        <name>Fe cation</name>
        <dbReference type="ChEBI" id="CHEBI:24875"/>
        <label>1</label>
    </ligand>
</feature>
<feature type="binding site" evidence="2">
    <location>
        <position position="201"/>
    </location>
    <ligand>
        <name>Fe cation</name>
        <dbReference type="ChEBI" id="CHEBI:24875"/>
        <label>2</label>
    </ligand>
</feature>
<feature type="binding site" evidence="2">
    <location>
        <position position="202"/>
    </location>
    <ligand>
        <name>Fe cation</name>
        <dbReference type="ChEBI" id="CHEBI:24875"/>
        <label>1</label>
    </ligand>
</feature>
<feature type="binding site" evidence="2">
    <location>
        <position position="306"/>
    </location>
    <ligand>
        <name>Fe cation</name>
        <dbReference type="ChEBI" id="CHEBI:24875"/>
        <label>2</label>
    </ligand>
</feature>
<feature type="binding site" evidence="2">
    <location>
        <position position="335"/>
    </location>
    <ligand>
        <name>Fe cation</name>
        <dbReference type="ChEBI" id="CHEBI:24875"/>
        <label>2</label>
    </ligand>
</feature>
<feature type="binding site" evidence="2">
    <location>
        <position position="338"/>
    </location>
    <ligand>
        <name>Fe cation</name>
        <dbReference type="ChEBI" id="CHEBI:24875"/>
        <label>1</label>
    </ligand>
</feature>
<feature type="binding site" evidence="2">
    <location>
        <position position="339"/>
    </location>
    <ligand>
        <name>Fe cation</name>
        <dbReference type="ChEBI" id="CHEBI:24875"/>
        <label>2</label>
    </ligand>
</feature>
<feature type="binding site" description="axial binding residue" evidence="4">
    <location>
        <position position="444"/>
    </location>
    <ligand>
        <name>heme</name>
        <dbReference type="ChEBI" id="CHEBI:30413"/>
    </ligand>
    <ligandPart>
        <name>Fe</name>
        <dbReference type="ChEBI" id="CHEBI:18248"/>
    </ligandPart>
</feature>
<feature type="binding site" description="axial binding residue" evidence="4">
    <location>
        <position position="470"/>
    </location>
    <ligand>
        <name>heme</name>
        <dbReference type="ChEBI" id="CHEBI:30413"/>
    </ligand>
    <ligandPart>
        <name>Fe</name>
        <dbReference type="ChEBI" id="CHEBI:18248"/>
    </ligandPart>
</feature>
<feature type="sequence conflict" description="In Ref. 5; AAT93029." evidence="13" ref="5">
    <original>D</original>
    <variation>G</variation>
    <location>
        <position position="67"/>
    </location>
</feature>
<feature type="sequence conflict" description="In Ref. 1; AAA34826." evidence="13" ref="1">
    <original>L</original>
    <variation>M</variation>
    <location>
        <position position="304"/>
    </location>
</feature>
<sequence>MPTSGTTIELIDDQFPKDDSASSGIVDEVDLTEANILATGLNKKAPRIVNGFGSLMGSKEMVSVEFDKKGNEKKSNLDRLLEKDNQEKEEAKTKIHISEQPWTLNNWHQHLNWLNMVLVCGMPMIGWYFALSGKVPLHLNVFLFSVFYYAVGGVSITAGYHRLWSHRSYSAHWPLRLFYAIFGCASVEGSAKWWGHSHRIHHRYTDTLRDPYDARRGLWYSHMGWMLLKPNPKYKARADITDMTDDWTIRFQHRHYILLMLLTAFVIPTLICGYFFNDYMGGLIYAGFIRVFVIQQATFCINSLAHYIGTQPFDDRRTPRDNWITAIVTFGEGYHNFHHEFPTDYRNAIKWYQYDPTKVIIYLTSLVGLAYDLKKFSQNAIEEALIQQEQKKINKKKAKINWGPVLTDLPMWDKQTFLAKSKENKGLVIISGIVHDVSGYISEHPGGETLIKTALGKDATKAFSGGVYRHSNAAQNVLADMRVAVIKESKNSAIRMASKRGEIYETGKFF</sequence>
<reference key="1">
    <citation type="journal article" date="1990" name="J. Biol. Chem.">
        <title>The OLE1 gene of Saccharomyces cerevisiae encodes the delta 9 fatty acid desaturase and can be functionally replaced by the rat stearoyl-CoA desaturase gene.</title>
        <authorList>
            <person name="Stukey J.E."/>
            <person name="McDonough V.M."/>
            <person name="Martin C.E."/>
        </authorList>
    </citation>
    <scope>NUCLEOTIDE SEQUENCE [GENOMIC DNA]</scope>
    <scope>FUNCTION</scope>
    <scope>CATALYTIC ACTIVITY</scope>
</reference>
<reference key="2">
    <citation type="journal article" date="1997" name="Yeast">
        <title>The characterization of two new clusters of duplicated genes suggests a 'Lego' organization of the yeast Saccharomyces cerevisiae chromosomes.</title>
        <authorList>
            <person name="Feuermann M."/>
            <person name="de Montigny J."/>
            <person name="Potier S."/>
            <person name="Souciet J.-L."/>
        </authorList>
    </citation>
    <scope>NUCLEOTIDE SEQUENCE [GENOMIC DNA]</scope>
    <source>
        <strain>ATCC 204508 / S288c</strain>
    </source>
</reference>
<reference key="3">
    <citation type="journal article" date="1997" name="Nature">
        <title>The nucleotide sequence of Saccharomyces cerevisiae chromosome VII.</title>
        <authorList>
            <person name="Tettelin H."/>
            <person name="Agostoni-Carbone M.L."/>
            <person name="Albermann K."/>
            <person name="Albers M."/>
            <person name="Arroyo J."/>
            <person name="Backes U."/>
            <person name="Barreiros T."/>
            <person name="Bertani I."/>
            <person name="Bjourson A.J."/>
            <person name="Brueckner M."/>
            <person name="Bruschi C.V."/>
            <person name="Carignani G."/>
            <person name="Castagnoli L."/>
            <person name="Cerdan E."/>
            <person name="Clemente M.L."/>
            <person name="Coblenz A."/>
            <person name="Coglievina M."/>
            <person name="Coissac E."/>
            <person name="Defoor E."/>
            <person name="Del Bino S."/>
            <person name="Delius H."/>
            <person name="Delneri D."/>
            <person name="de Wergifosse P."/>
            <person name="Dujon B."/>
            <person name="Durand P."/>
            <person name="Entian K.-D."/>
            <person name="Eraso P."/>
            <person name="Escribano V."/>
            <person name="Fabiani L."/>
            <person name="Fartmann B."/>
            <person name="Feroli F."/>
            <person name="Feuermann M."/>
            <person name="Frontali L."/>
            <person name="Garcia-Gonzalez M."/>
            <person name="Garcia-Saez M.I."/>
            <person name="Goffeau A."/>
            <person name="Guerreiro P."/>
            <person name="Hani J."/>
            <person name="Hansen M."/>
            <person name="Hebling U."/>
            <person name="Hernandez K."/>
            <person name="Heumann K."/>
            <person name="Hilger F."/>
            <person name="Hofmann B."/>
            <person name="Indge K.J."/>
            <person name="James C.M."/>
            <person name="Klima R."/>
            <person name="Koetter P."/>
            <person name="Kramer B."/>
            <person name="Kramer W."/>
            <person name="Lauquin G."/>
            <person name="Leuther H."/>
            <person name="Louis E.J."/>
            <person name="Maillier E."/>
            <person name="Marconi A."/>
            <person name="Martegani E."/>
            <person name="Mazon M.J."/>
            <person name="Mazzoni C."/>
            <person name="McReynolds A.D.K."/>
            <person name="Melchioretto P."/>
            <person name="Mewes H.-W."/>
            <person name="Minenkova O."/>
            <person name="Mueller-Auer S."/>
            <person name="Nawrocki A."/>
            <person name="Netter P."/>
            <person name="Neu R."/>
            <person name="Nombela C."/>
            <person name="Oliver S.G."/>
            <person name="Panzeri L."/>
            <person name="Paoluzi S."/>
            <person name="Plevani P."/>
            <person name="Portetelle D."/>
            <person name="Portillo F."/>
            <person name="Potier S."/>
            <person name="Purnelle B."/>
            <person name="Rieger M."/>
            <person name="Riles L."/>
            <person name="Rinaldi T."/>
            <person name="Robben J."/>
            <person name="Rodrigues-Pousada C."/>
            <person name="Rodriguez-Belmonte E."/>
            <person name="Rodriguez-Torres A.M."/>
            <person name="Rose M."/>
            <person name="Ruzzi M."/>
            <person name="Saliola M."/>
            <person name="Sanchez-Perez M."/>
            <person name="Schaefer B."/>
            <person name="Schaefer M."/>
            <person name="Scharfe M."/>
            <person name="Schmidheini T."/>
            <person name="Schreer A."/>
            <person name="Skala J."/>
            <person name="Souciet J.-L."/>
            <person name="Steensma H.Y."/>
            <person name="Talla E."/>
            <person name="Thierry A."/>
            <person name="Vandenbol M."/>
            <person name="van der Aart Q.J.M."/>
            <person name="Van Dyck L."/>
            <person name="Vanoni M."/>
            <person name="Verhasselt P."/>
            <person name="Voet M."/>
            <person name="Volckaert G."/>
            <person name="Wambutt R."/>
            <person name="Watson M.D."/>
            <person name="Weber N."/>
            <person name="Wedler E."/>
            <person name="Wedler H."/>
            <person name="Wipfli P."/>
            <person name="Wolf K."/>
            <person name="Wright L.F."/>
            <person name="Zaccaria P."/>
            <person name="Zimmermann M."/>
            <person name="Zollner A."/>
            <person name="Kleine K."/>
        </authorList>
    </citation>
    <scope>NUCLEOTIDE SEQUENCE [LARGE SCALE GENOMIC DNA]</scope>
    <source>
        <strain>ATCC 204508 / S288c</strain>
    </source>
</reference>
<reference key="4">
    <citation type="journal article" date="2014" name="G3 (Bethesda)">
        <title>The reference genome sequence of Saccharomyces cerevisiae: Then and now.</title>
        <authorList>
            <person name="Engel S.R."/>
            <person name="Dietrich F.S."/>
            <person name="Fisk D.G."/>
            <person name="Binkley G."/>
            <person name="Balakrishnan R."/>
            <person name="Costanzo M.C."/>
            <person name="Dwight S.S."/>
            <person name="Hitz B.C."/>
            <person name="Karra K."/>
            <person name="Nash R.S."/>
            <person name="Weng S."/>
            <person name="Wong E.D."/>
            <person name="Lloyd P."/>
            <person name="Skrzypek M.S."/>
            <person name="Miyasato S.R."/>
            <person name="Simison M."/>
            <person name="Cherry J.M."/>
        </authorList>
    </citation>
    <scope>GENOME REANNOTATION</scope>
    <source>
        <strain>ATCC 204508 / S288c</strain>
    </source>
</reference>
<reference key="5">
    <citation type="journal article" date="2007" name="Genome Res.">
        <title>Approaching a complete repository of sequence-verified protein-encoding clones for Saccharomyces cerevisiae.</title>
        <authorList>
            <person name="Hu Y."/>
            <person name="Rolfs A."/>
            <person name="Bhullar B."/>
            <person name="Murthy T.V.S."/>
            <person name="Zhu C."/>
            <person name="Berger M.F."/>
            <person name="Camargo A.A."/>
            <person name="Kelley F."/>
            <person name="McCarron S."/>
            <person name="Jepson D."/>
            <person name="Richardson A."/>
            <person name="Raphael J."/>
            <person name="Moreira D."/>
            <person name="Taycher E."/>
            <person name="Zuo D."/>
            <person name="Mohr S."/>
            <person name="Kane M.F."/>
            <person name="Williamson J."/>
            <person name="Simpson A.J.G."/>
            <person name="Bulyk M.L."/>
            <person name="Harlow E."/>
            <person name="Marsischky G."/>
            <person name="Kolodner R.D."/>
            <person name="LaBaer J."/>
        </authorList>
    </citation>
    <scope>NUCLEOTIDE SEQUENCE [GENOMIC DNA]</scope>
    <source>
        <strain>ATCC 204508 / S288c</strain>
    </source>
</reference>
<reference key="6">
    <citation type="journal article" date="1989" name="J. Biol. Chem.">
        <title>Isolation and characterization of OLE1, a gene affecting fatty acid desaturation from Saccharomyces cerevisiae.</title>
        <authorList>
            <person name="Stukey J.E."/>
            <person name="McDonough V.M."/>
            <person name="Martin C.E."/>
        </authorList>
    </citation>
    <scope>FUNCTION</scope>
    <scope>CATALYTIC ACTIVITY</scope>
</reference>
<reference key="7">
    <citation type="journal article" date="1994" name="Biochemistry">
        <title>Eight histidine residues are catalytically essential in a membrane-associated iron enzyme, stearoyl-CoA desaturase, and are conserved in alkane hydroxylase and xylene monooxygenase.</title>
        <authorList>
            <person name="Shanklin J."/>
            <person name="Whittle E."/>
            <person name="Fox B.G."/>
        </authorList>
    </citation>
    <scope>FUNCTION</scope>
    <scope>CATALYTIC ACTIVITY</scope>
</reference>
<reference key="8">
    <citation type="journal article" date="2006" name="J. Lipid Res.">
        <title>Identification of mouse palmitoyl-coenzyme A Delta9-desaturase.</title>
        <authorList>
            <person name="Miyazaki M."/>
            <person name="Bruggink S.M."/>
            <person name="Ntambi J.M."/>
        </authorList>
    </citation>
    <scope>FUNCTION</scope>
    <scope>CATALYTIC ACTIVITY</scope>
</reference>
<reference key="9">
    <citation type="journal article" date="2006" name="Proc. Natl. Acad. Sci. U.S.A.">
        <title>A global topology map of the Saccharomyces cerevisiae membrane proteome.</title>
        <authorList>
            <person name="Kim H."/>
            <person name="Melen K."/>
            <person name="Oesterberg M."/>
            <person name="von Heijne G."/>
        </authorList>
    </citation>
    <scope>TOPOLOGY [LARGE SCALE ANALYSIS]</scope>
    <source>
        <strain>ATCC 208353 / W303-1A</strain>
    </source>
</reference>
<reference key="10">
    <citation type="journal article" date="2012" name="Mol. Biol. Cell">
        <title>The yeast acyltransferase Sct1p regulates fatty acid desaturation by competing with the desaturase Ole1p.</title>
        <authorList>
            <person name="De Smet C.H."/>
            <person name="Vittone E."/>
            <person name="Scherer M."/>
            <person name="Houweling M."/>
            <person name="Liebisch G."/>
            <person name="Brouwers J.F."/>
            <person name="de Kroon A.I."/>
        </authorList>
    </citation>
    <scope>FUNCTION</scope>
</reference>
<reference key="11">
    <citation type="journal article" date="2016" name="Nat. Methods">
        <title>One library to make them all: streamlining the creation of yeast libraries via a SWAp-Tag strategy.</title>
        <authorList>
            <person name="Yofe I."/>
            <person name="Weill U."/>
            <person name="Meurer M."/>
            <person name="Chuartzman S."/>
            <person name="Zalckvar E."/>
            <person name="Goldman O."/>
            <person name="Ben-Dor S."/>
            <person name="Schuetze C."/>
            <person name="Wiedemann N."/>
            <person name="Knop M."/>
            <person name="Khmelinskii A."/>
            <person name="Schuldiner M."/>
        </authorList>
    </citation>
    <scope>SUBCELLULAR LOCATION</scope>
</reference>
<evidence type="ECO:0000250" key="1">
    <source>
        <dbReference type="UniProtKB" id="O00767"/>
    </source>
</evidence>
<evidence type="ECO:0000250" key="2">
    <source>
        <dbReference type="UniProtKB" id="P13516"/>
    </source>
</evidence>
<evidence type="ECO:0000255" key="3"/>
<evidence type="ECO:0000255" key="4">
    <source>
        <dbReference type="PROSITE-ProRule" id="PRU00279"/>
    </source>
</evidence>
<evidence type="ECO:0000269" key="5">
    <source>
    </source>
</evidence>
<evidence type="ECO:0000269" key="6">
    <source>
    </source>
</evidence>
<evidence type="ECO:0000269" key="7">
    <source>
    </source>
</evidence>
<evidence type="ECO:0000269" key="8">
    <source>
    </source>
</evidence>
<evidence type="ECO:0000269" key="9">
    <source>
    </source>
</evidence>
<evidence type="ECO:0000269" key="10">
    <source>
    </source>
</evidence>
<evidence type="ECO:0000269" key="11">
    <source>
    </source>
</evidence>
<evidence type="ECO:0000303" key="12">
    <source>
    </source>
</evidence>
<evidence type="ECO:0000305" key="13"/>
<evidence type="ECO:0000305" key="14">
    <source>
    </source>
</evidence>
<evidence type="ECO:0000305" key="15">
    <source>
    </source>
</evidence>
<comment type="function">
    <text evidence="5 7 8 9 11">Stearoyl-CoA desaturase that utilizes O(2) and electrons from reduced cytochrome b5 to introduce the first double bond into saturated fatty acyl-CoA substrates (PubMed:1978720, PubMed:7947684). Catalyzes the insertion of a cis double bond at the delta-9 position into fatty acyl-CoA substrates including palmitoyl-CoA and stearoyl-CoA (PubMed:1978720, PubMed:2674136). Required for the biosynthesis of membrane phospholipids, cholesterol esters and triglycerides (PubMed:16443825, PubMed:1978720, PubMed:7947684). Regulates fatty acid desaturation, that is, the ratio of unsaturated versus saturated fatty acyl chains, by competing with the acyltransferase STC1 for the common substrate C16:0-CoA. SCT1 sequesters C16:0-CoA into lipids, thereby shielding it from desaturation by OLE1 (PubMed:22323296).</text>
</comment>
<comment type="catalytic activity">
    <reaction evidence="5 7 9 11">
        <text>octadecanoyl-CoA + 2 Fe(II)-[cytochrome b5] + O2 + 2 H(+) = (9Z)-octadecenoyl-CoA + 2 Fe(III)-[cytochrome b5] + 2 H2O</text>
        <dbReference type="Rhea" id="RHEA:19721"/>
        <dbReference type="Rhea" id="RHEA-COMP:10438"/>
        <dbReference type="Rhea" id="RHEA-COMP:10439"/>
        <dbReference type="ChEBI" id="CHEBI:15377"/>
        <dbReference type="ChEBI" id="CHEBI:15378"/>
        <dbReference type="ChEBI" id="CHEBI:15379"/>
        <dbReference type="ChEBI" id="CHEBI:29033"/>
        <dbReference type="ChEBI" id="CHEBI:29034"/>
        <dbReference type="ChEBI" id="CHEBI:57387"/>
        <dbReference type="ChEBI" id="CHEBI:57394"/>
        <dbReference type="EC" id="1.14.19.1"/>
    </reaction>
    <physiologicalReaction direction="left-to-right" evidence="15">
        <dbReference type="Rhea" id="RHEA:19722"/>
    </physiologicalReaction>
</comment>
<comment type="catalytic activity">
    <reaction evidence="9">
        <text>hexadecanoyl-CoA + 2 Fe(II)-[cytochrome b5] + O2 + 2 H(+) = (9Z)-hexadecenoyl-CoA + 2 Fe(III)-[cytochrome b5] + 2 H2O</text>
        <dbReference type="Rhea" id="RHEA:36931"/>
        <dbReference type="Rhea" id="RHEA-COMP:10438"/>
        <dbReference type="Rhea" id="RHEA-COMP:10439"/>
        <dbReference type="ChEBI" id="CHEBI:15377"/>
        <dbReference type="ChEBI" id="CHEBI:15378"/>
        <dbReference type="ChEBI" id="CHEBI:15379"/>
        <dbReference type="ChEBI" id="CHEBI:29033"/>
        <dbReference type="ChEBI" id="CHEBI:29034"/>
        <dbReference type="ChEBI" id="CHEBI:57379"/>
        <dbReference type="ChEBI" id="CHEBI:61540"/>
    </reaction>
    <physiologicalReaction direction="left-to-right" evidence="15">
        <dbReference type="Rhea" id="RHEA:36932"/>
    </physiologicalReaction>
</comment>
<comment type="cofactor">
    <cofactor evidence="2">
        <name>Fe(2+)</name>
        <dbReference type="ChEBI" id="CHEBI:29033"/>
    </cofactor>
    <text evidence="2">Expected to bind 2 Fe(2+) ions per subunit.</text>
</comment>
<comment type="subcellular location">
    <subcellularLocation>
        <location evidence="10">Endoplasmic reticulum membrane</location>
        <topology evidence="3">Multi-pass membrane protein</topology>
    </subcellularLocation>
</comment>
<comment type="domain">
    <text evidence="1">The histidine box domains are involved in binding the catalytic metal ions.</text>
</comment>
<comment type="similarity">
    <text evidence="13">Belongs to the fatty acid desaturase type 1 family.</text>
</comment>
<accession>P21147</accession>
<accession>D6VU86</accession>
<accession>E9P911</accession>
<name>ACO1_YEAST</name>